<proteinExistence type="inferred from homology"/>
<comment type="function">
    <text evidence="1">Accepts the ubiquitin-like protein NEDD8/RUB1 from the UBA3-ULA1 E1 complex and catalyzes its covalent attachment to other proteins.</text>
</comment>
<comment type="catalytic activity">
    <reaction>
        <text>[E1 NEDD8-activating enzyme]-S-[NEDD8 protein]-yl-L-cysteine + [E2 NEDD8-conjugating enzyme]-L-cysteine = [E1 NEDD8-activating enzyme]-L-cysteine + [E2 NEDD8-conjugating enzyme]-S-[NEDD8-protein]-yl-L-cysteine.</text>
        <dbReference type="EC" id="2.3.2.34"/>
    </reaction>
</comment>
<comment type="pathway">
    <text>Protein modification; protein neddylation.</text>
</comment>
<comment type="similarity">
    <text evidence="2">Belongs to the ubiquitin-conjugating enzyme family. UBC12 subfamily.</text>
</comment>
<dbReference type="EC" id="2.3.2.34"/>
<dbReference type="EMBL" id="CR380950">
    <property type="protein sequence ID" value="CAG58597.1"/>
    <property type="molecule type" value="Genomic_DNA"/>
</dbReference>
<dbReference type="RefSeq" id="XP_445686.1">
    <property type="nucleotide sequence ID" value="XM_445686.1"/>
</dbReference>
<dbReference type="SMR" id="Q6FVQ8"/>
<dbReference type="FunCoup" id="Q6FVQ8">
    <property type="interactions" value="867"/>
</dbReference>
<dbReference type="STRING" id="284593.Q6FVQ8"/>
<dbReference type="EnsemblFungi" id="CAGL0D06468g-T">
    <property type="protein sequence ID" value="CAGL0D06468g-T-p1"/>
    <property type="gene ID" value="CAGL0D06468g"/>
</dbReference>
<dbReference type="KEGG" id="cgr:2886969"/>
<dbReference type="CGD" id="CAL0128479">
    <property type="gene designation" value="CAGL0D06468g"/>
</dbReference>
<dbReference type="VEuPathDB" id="FungiDB:B1J91_D06468g"/>
<dbReference type="VEuPathDB" id="FungiDB:CAGL0D06468g"/>
<dbReference type="eggNOG" id="KOG0420">
    <property type="taxonomic scope" value="Eukaryota"/>
</dbReference>
<dbReference type="HOGENOM" id="CLU_030988_6_0_1"/>
<dbReference type="InParanoid" id="Q6FVQ8"/>
<dbReference type="OMA" id="YDNIVSP"/>
<dbReference type="UniPathway" id="UPA00885"/>
<dbReference type="Proteomes" id="UP000002428">
    <property type="component" value="Chromosome D"/>
</dbReference>
<dbReference type="GO" id="GO:0005524">
    <property type="term" value="F:ATP binding"/>
    <property type="evidence" value="ECO:0007669"/>
    <property type="project" value="UniProtKB-KW"/>
</dbReference>
<dbReference type="GO" id="GO:0061654">
    <property type="term" value="F:NEDD8 conjugating enzyme activity"/>
    <property type="evidence" value="ECO:0007669"/>
    <property type="project" value="UniProtKB-EC"/>
</dbReference>
<dbReference type="GO" id="GO:0045116">
    <property type="term" value="P:protein neddylation"/>
    <property type="evidence" value="ECO:0007669"/>
    <property type="project" value="UniProtKB-UniPathway"/>
</dbReference>
<dbReference type="CDD" id="cd23794">
    <property type="entry name" value="UBCc_UBE2F_UBE2M"/>
    <property type="match status" value="1"/>
</dbReference>
<dbReference type="FunFam" id="3.10.110.10:FF:000005">
    <property type="entry name" value="NEDD8-conjugating enzyme Ubc12"/>
    <property type="match status" value="1"/>
</dbReference>
<dbReference type="Gene3D" id="3.10.110.10">
    <property type="entry name" value="Ubiquitin Conjugating Enzyme"/>
    <property type="match status" value="1"/>
</dbReference>
<dbReference type="InterPro" id="IPR050113">
    <property type="entry name" value="Ub_conjugating_enzyme"/>
</dbReference>
<dbReference type="InterPro" id="IPR000608">
    <property type="entry name" value="UBQ-conjugat_E2_core"/>
</dbReference>
<dbReference type="InterPro" id="IPR023313">
    <property type="entry name" value="UBQ-conjugating_AS"/>
</dbReference>
<dbReference type="InterPro" id="IPR016135">
    <property type="entry name" value="UBQ-conjugating_enzyme/RWD"/>
</dbReference>
<dbReference type="PANTHER" id="PTHR24067">
    <property type="entry name" value="UBIQUITIN-CONJUGATING ENZYME E2"/>
    <property type="match status" value="1"/>
</dbReference>
<dbReference type="Pfam" id="PF00179">
    <property type="entry name" value="UQ_con"/>
    <property type="match status" value="1"/>
</dbReference>
<dbReference type="SMART" id="SM00212">
    <property type="entry name" value="UBCc"/>
    <property type="match status" value="1"/>
</dbReference>
<dbReference type="SUPFAM" id="SSF54495">
    <property type="entry name" value="UBC-like"/>
    <property type="match status" value="1"/>
</dbReference>
<dbReference type="PROSITE" id="PS00183">
    <property type="entry name" value="UBC_1"/>
    <property type="match status" value="1"/>
</dbReference>
<dbReference type="PROSITE" id="PS50127">
    <property type="entry name" value="UBC_2"/>
    <property type="match status" value="1"/>
</dbReference>
<protein>
    <recommendedName>
        <fullName>NEDD8-conjugating enzyme UBC12</fullName>
        <ecNumber>2.3.2.34</ecNumber>
    </recommendedName>
    <alternativeName>
        <fullName>RUB1-conjugating enzyme</fullName>
    </alternativeName>
    <alternativeName>
        <fullName>Ubiquitin carrier protein 12</fullName>
    </alternativeName>
</protein>
<reference key="1">
    <citation type="journal article" date="2004" name="Nature">
        <title>Genome evolution in yeasts.</title>
        <authorList>
            <person name="Dujon B."/>
            <person name="Sherman D."/>
            <person name="Fischer G."/>
            <person name="Durrens P."/>
            <person name="Casaregola S."/>
            <person name="Lafontaine I."/>
            <person name="de Montigny J."/>
            <person name="Marck C."/>
            <person name="Neuveglise C."/>
            <person name="Talla E."/>
            <person name="Goffard N."/>
            <person name="Frangeul L."/>
            <person name="Aigle M."/>
            <person name="Anthouard V."/>
            <person name="Babour A."/>
            <person name="Barbe V."/>
            <person name="Barnay S."/>
            <person name="Blanchin S."/>
            <person name="Beckerich J.-M."/>
            <person name="Beyne E."/>
            <person name="Bleykasten C."/>
            <person name="Boisrame A."/>
            <person name="Boyer J."/>
            <person name="Cattolico L."/>
            <person name="Confanioleri F."/>
            <person name="de Daruvar A."/>
            <person name="Despons L."/>
            <person name="Fabre E."/>
            <person name="Fairhead C."/>
            <person name="Ferry-Dumazet H."/>
            <person name="Groppi A."/>
            <person name="Hantraye F."/>
            <person name="Hennequin C."/>
            <person name="Jauniaux N."/>
            <person name="Joyet P."/>
            <person name="Kachouri R."/>
            <person name="Kerrest A."/>
            <person name="Koszul R."/>
            <person name="Lemaire M."/>
            <person name="Lesur I."/>
            <person name="Ma L."/>
            <person name="Muller H."/>
            <person name="Nicaud J.-M."/>
            <person name="Nikolski M."/>
            <person name="Oztas S."/>
            <person name="Ozier-Kalogeropoulos O."/>
            <person name="Pellenz S."/>
            <person name="Potier S."/>
            <person name="Richard G.-F."/>
            <person name="Straub M.-L."/>
            <person name="Suleau A."/>
            <person name="Swennen D."/>
            <person name="Tekaia F."/>
            <person name="Wesolowski-Louvel M."/>
            <person name="Westhof E."/>
            <person name="Wirth B."/>
            <person name="Zeniou-Meyer M."/>
            <person name="Zivanovic Y."/>
            <person name="Bolotin-Fukuhara M."/>
            <person name="Thierry A."/>
            <person name="Bouchier C."/>
            <person name="Caudron B."/>
            <person name="Scarpelli C."/>
            <person name="Gaillardin C."/>
            <person name="Weissenbach J."/>
            <person name="Wincker P."/>
            <person name="Souciet J.-L."/>
        </authorList>
    </citation>
    <scope>NUCLEOTIDE SEQUENCE [LARGE SCALE GENOMIC DNA]</scope>
    <source>
        <strain>ATCC 2001 / BCRC 20586 / JCM 3761 / NBRC 0622 / NRRL Y-65 / CBS 138</strain>
    </source>
</reference>
<keyword id="KW-0067">ATP-binding</keyword>
<keyword id="KW-0547">Nucleotide-binding</keyword>
<keyword id="KW-1185">Reference proteome</keyword>
<keyword id="KW-0808">Transferase</keyword>
<keyword id="KW-0833">Ubl conjugation pathway</keyword>
<organism>
    <name type="scientific">Candida glabrata (strain ATCC 2001 / BCRC 20586 / JCM 3761 / NBRC 0622 / NRRL Y-65 / CBS 138)</name>
    <name type="common">Yeast</name>
    <name type="synonym">Nakaseomyces glabratus</name>
    <dbReference type="NCBI Taxonomy" id="284593"/>
    <lineage>
        <taxon>Eukaryota</taxon>
        <taxon>Fungi</taxon>
        <taxon>Dikarya</taxon>
        <taxon>Ascomycota</taxon>
        <taxon>Saccharomycotina</taxon>
        <taxon>Saccharomycetes</taxon>
        <taxon>Saccharomycetales</taxon>
        <taxon>Saccharomycetaceae</taxon>
        <taxon>Nakaseomyces</taxon>
    </lineage>
</organism>
<gene>
    <name type="primary">UBC12</name>
    <name type="ordered locus">CAGL0D06468g</name>
</gene>
<evidence type="ECO:0000250" key="1"/>
<evidence type="ECO:0000255" key="2">
    <source>
        <dbReference type="PROSITE-ProRule" id="PRU00388"/>
    </source>
</evidence>
<evidence type="ECO:0000255" key="3">
    <source>
        <dbReference type="PROSITE-ProRule" id="PRU10133"/>
    </source>
</evidence>
<evidence type="ECO:0000256" key="4">
    <source>
        <dbReference type="SAM" id="MobiDB-lite"/>
    </source>
</evidence>
<sequence>MLKLRQLQQQKQQQLAKNAGSSVKANTNSTSPAKLRLQKDIEELELPPTVRVNIISLDNHKEMSLNIIIIPDEGFYKGGKFRFTATFLETYPIDPPKVICNNKIFHPNIDPHGKICLNILREDWSPALDLQCIVLGLLSLFQEPNGNDPLNKEAAEVLNKDKLEFGNLVRLAMSGAMVGSTYYECVI</sequence>
<name>UBC12_CANGA</name>
<accession>Q6FVQ8</accession>
<feature type="chain" id="PRO_0000082497" description="NEDD8-conjugating enzyme UBC12">
    <location>
        <begin position="1"/>
        <end position="187"/>
    </location>
</feature>
<feature type="domain" description="UBC core" evidence="2">
    <location>
        <begin position="32"/>
        <end position="178"/>
    </location>
</feature>
<feature type="region of interest" description="Disordered" evidence="4">
    <location>
        <begin position="11"/>
        <end position="34"/>
    </location>
</feature>
<feature type="compositionally biased region" description="Polar residues" evidence="4">
    <location>
        <begin position="19"/>
        <end position="32"/>
    </location>
</feature>
<feature type="active site" description="Glycyl thioester intermediate" evidence="2 3">
    <location>
        <position position="116"/>
    </location>
</feature>